<evidence type="ECO:0000250" key="1"/>
<evidence type="ECO:0000305" key="2"/>
<geneLocation type="plasmid">
    <name>pSymB</name>
    <name>megaplasmid 2</name>
</geneLocation>
<proteinExistence type="inferred from homology"/>
<dbReference type="EC" id="5.1.3.2"/>
<dbReference type="EMBL" id="X58126">
    <property type="protein sequence ID" value="CAA41127.1"/>
    <property type="molecule type" value="Genomic_DNA"/>
</dbReference>
<dbReference type="EMBL" id="AL591985">
    <property type="protein sequence ID" value="CAC49465.1"/>
    <property type="molecule type" value="Genomic_DNA"/>
</dbReference>
<dbReference type="EMBL" id="Z50189">
    <property type="protein sequence ID" value="CAA90567.1"/>
    <property type="molecule type" value="Genomic_DNA"/>
</dbReference>
<dbReference type="EMBL" id="AJ225561">
    <property type="protein sequence ID" value="CAA12528.1"/>
    <property type="molecule type" value="Genomic_DNA"/>
</dbReference>
<dbReference type="PIR" id="A95975">
    <property type="entry name" value="A95975"/>
</dbReference>
<dbReference type="PIR" id="S16300">
    <property type="entry name" value="S16300"/>
</dbReference>
<dbReference type="RefSeq" id="NP_437605.1">
    <property type="nucleotide sequence ID" value="NC_003078.1"/>
</dbReference>
<dbReference type="SMR" id="P26503"/>
<dbReference type="EnsemblBacteria" id="CAC49465">
    <property type="protein sequence ID" value="CAC49465"/>
    <property type="gene ID" value="SM_b20942"/>
</dbReference>
<dbReference type="KEGG" id="sme:SM_b20942"/>
<dbReference type="PATRIC" id="fig|266834.11.peg.5994"/>
<dbReference type="eggNOG" id="COG1087">
    <property type="taxonomic scope" value="Bacteria"/>
</dbReference>
<dbReference type="HOGENOM" id="CLU_007383_1_10_5"/>
<dbReference type="OrthoDB" id="9801785at2"/>
<dbReference type="UniPathway" id="UPA00214"/>
<dbReference type="UniPathway" id="UPA00631"/>
<dbReference type="Proteomes" id="UP000001976">
    <property type="component" value="Plasmid pSymB"/>
</dbReference>
<dbReference type="GO" id="GO:0003978">
    <property type="term" value="F:UDP-glucose 4-epimerase activity"/>
    <property type="evidence" value="ECO:0007669"/>
    <property type="project" value="UniProtKB-EC"/>
</dbReference>
<dbReference type="GO" id="GO:0033499">
    <property type="term" value="P:galactose catabolic process via UDP-galactose, Leloir pathway"/>
    <property type="evidence" value="ECO:0007669"/>
    <property type="project" value="TreeGrafter"/>
</dbReference>
<dbReference type="GO" id="GO:0000271">
    <property type="term" value="P:polysaccharide biosynthetic process"/>
    <property type="evidence" value="ECO:0007669"/>
    <property type="project" value="UniProtKB-KW"/>
</dbReference>
<dbReference type="CDD" id="cd05247">
    <property type="entry name" value="UDP_G4E_1_SDR_e"/>
    <property type="match status" value="1"/>
</dbReference>
<dbReference type="Gene3D" id="3.40.50.720">
    <property type="entry name" value="NAD(P)-binding Rossmann-like Domain"/>
    <property type="match status" value="1"/>
</dbReference>
<dbReference type="Gene3D" id="3.90.25.10">
    <property type="entry name" value="UDP-galactose 4-epimerase, domain 1"/>
    <property type="match status" value="1"/>
</dbReference>
<dbReference type="InterPro" id="IPR016040">
    <property type="entry name" value="NAD(P)-bd_dom"/>
</dbReference>
<dbReference type="InterPro" id="IPR036291">
    <property type="entry name" value="NAD(P)-bd_dom_sf"/>
</dbReference>
<dbReference type="InterPro" id="IPR005886">
    <property type="entry name" value="UDP_G4E"/>
</dbReference>
<dbReference type="NCBIfam" id="TIGR01179">
    <property type="entry name" value="galE"/>
    <property type="match status" value="1"/>
</dbReference>
<dbReference type="PANTHER" id="PTHR43725:SF53">
    <property type="entry name" value="UDP-ARABINOSE 4-EPIMERASE 1"/>
    <property type="match status" value="1"/>
</dbReference>
<dbReference type="PANTHER" id="PTHR43725">
    <property type="entry name" value="UDP-GLUCOSE 4-EPIMERASE"/>
    <property type="match status" value="1"/>
</dbReference>
<dbReference type="Pfam" id="PF16363">
    <property type="entry name" value="GDP_Man_Dehyd"/>
    <property type="match status" value="1"/>
</dbReference>
<dbReference type="SUPFAM" id="SSF51735">
    <property type="entry name" value="NAD(P)-binding Rossmann-fold domains"/>
    <property type="match status" value="1"/>
</dbReference>
<accession>P26503</accession>
<accession>O54058</accession>
<accession>P72293</accession>
<keyword id="KW-0119">Carbohydrate metabolism</keyword>
<keyword id="KW-0270">Exopolysaccharide synthesis</keyword>
<keyword id="KW-0299">Galactose metabolism</keyword>
<keyword id="KW-0413">Isomerase</keyword>
<keyword id="KW-0520">NAD</keyword>
<keyword id="KW-0614">Plasmid</keyword>
<keyword id="KW-1185">Reference proteome</keyword>
<comment type="catalytic activity">
    <reaction>
        <text>UDP-alpha-D-glucose = UDP-alpha-D-galactose</text>
        <dbReference type="Rhea" id="RHEA:22168"/>
        <dbReference type="ChEBI" id="CHEBI:58885"/>
        <dbReference type="ChEBI" id="CHEBI:66914"/>
        <dbReference type="EC" id="5.1.3.2"/>
    </reaction>
</comment>
<comment type="cofactor">
    <cofactor>
        <name>NAD(+)</name>
        <dbReference type="ChEBI" id="CHEBI:57540"/>
    </cofactor>
</comment>
<comment type="pathway">
    <text>Carbohydrate metabolism; galactose metabolism.</text>
</comment>
<comment type="pathway">
    <text>Glycan metabolism; exopolysaccharide biosynthesis.</text>
</comment>
<comment type="similarity">
    <text evidence="2">Belongs to the NAD(P)-dependent epimerase/dehydratase family.</text>
</comment>
<protein>
    <recommendedName>
        <fullName>UDP-glucose 4-epimerase</fullName>
        <ecNumber>5.1.3.2</ecNumber>
    </recommendedName>
    <alternativeName>
        <fullName>Galactowaldenase</fullName>
    </alternativeName>
</protein>
<gene>
    <name type="primary">exoB</name>
    <name type="ordered locus">RB1065</name>
    <name type="ORF">SMb20942</name>
</gene>
<sequence>MQNNNILVVGGAGYIGSHTCLQLAAKGYQPVVYDNLSNGHEEFVKWGVLEKGDIRDRQRLDEVLARHKPRAILHFAAMIEVGESVKDPAAFYDNNVIGTLTLLSAALAAGIDAFVFSSTCATYGLPDSVPMDESHKQAPINPYGRTKWICEQALKDYGLYKGLRSVILRYFNAAGADFEGRIGEWHEPETHAIPLAIDAALGRREGFKVFGTDYDTRDGTCVRDYIHVLDLADAHVRAVDYLLEGGESVALNLGTGTGTTVKELLDAIEKVAKRPFNIGYAERREGDSTTLVANNDKARQVLGWEPQYDLAAITESAWNWHSRRNQGG</sequence>
<organism>
    <name type="scientific">Rhizobium meliloti (strain 1021)</name>
    <name type="common">Ensifer meliloti</name>
    <name type="synonym">Sinorhizobium meliloti</name>
    <dbReference type="NCBI Taxonomy" id="266834"/>
    <lineage>
        <taxon>Bacteria</taxon>
        <taxon>Pseudomonadati</taxon>
        <taxon>Pseudomonadota</taxon>
        <taxon>Alphaproteobacteria</taxon>
        <taxon>Hyphomicrobiales</taxon>
        <taxon>Rhizobiaceae</taxon>
        <taxon>Sinorhizobium/Ensifer group</taxon>
        <taxon>Sinorhizobium</taxon>
    </lineage>
</organism>
<reference key="1">
    <citation type="journal article" date="1991" name="Mol. Microbiol.">
        <title>The Rhizobium meliloti exoZl exoB fragment of megaplasmid 2: ExoB functions as a UDP-glucose 4-epimerase and ExoZ shows homology to NodX of Rhizobium leguminosarum biovar viciae strain TOM.</title>
        <authorList>
            <person name="Buendia A.M."/>
            <person name="Enenkel B."/>
            <person name="Koeplin R."/>
            <person name="Niehaus K."/>
            <person name="Arnold W."/>
            <person name="Puehler A."/>
        </authorList>
    </citation>
    <scope>NUCLEOTIDE SEQUENCE [GENOMIC DNA]</scope>
    <source>
        <strain>RCR2011 / SU47</strain>
    </source>
</reference>
<reference key="2">
    <citation type="journal article" date="2001" name="Proc. Natl. Acad. Sci. U.S.A.">
        <title>The complete sequence of the 1,683-kb pSymB megaplasmid from the N2-fixing endosymbiont Sinorhizobium meliloti.</title>
        <authorList>
            <person name="Finan T.M."/>
            <person name="Weidner S."/>
            <person name="Wong K."/>
            <person name="Buhrmester J."/>
            <person name="Chain P."/>
            <person name="Vorhoelter F.J."/>
            <person name="Hernandez-Lucas I."/>
            <person name="Becker A."/>
            <person name="Cowie A."/>
            <person name="Gouzy J."/>
            <person name="Golding B."/>
            <person name="Puehler A."/>
        </authorList>
    </citation>
    <scope>NUCLEOTIDE SEQUENCE [LARGE SCALE GENOMIC DNA]</scope>
    <source>
        <strain>1021</strain>
    </source>
</reference>
<reference key="3">
    <citation type="journal article" date="2001" name="Science">
        <title>The composite genome of the legume symbiont Sinorhizobium meliloti.</title>
        <authorList>
            <person name="Galibert F."/>
            <person name="Finan T.M."/>
            <person name="Long S.R."/>
            <person name="Puehler A."/>
            <person name="Abola P."/>
            <person name="Ampe F."/>
            <person name="Barloy-Hubler F."/>
            <person name="Barnett M.J."/>
            <person name="Becker A."/>
            <person name="Boistard P."/>
            <person name="Bothe G."/>
            <person name="Boutry M."/>
            <person name="Bowser L."/>
            <person name="Buhrmester J."/>
            <person name="Cadieu E."/>
            <person name="Capela D."/>
            <person name="Chain P."/>
            <person name="Cowie A."/>
            <person name="Davis R.W."/>
            <person name="Dreano S."/>
            <person name="Federspiel N.A."/>
            <person name="Fisher R.F."/>
            <person name="Gloux S."/>
            <person name="Godrie T."/>
            <person name="Goffeau A."/>
            <person name="Golding B."/>
            <person name="Gouzy J."/>
            <person name="Gurjal M."/>
            <person name="Hernandez-Lucas I."/>
            <person name="Hong A."/>
            <person name="Huizar L."/>
            <person name="Hyman R.W."/>
            <person name="Jones T."/>
            <person name="Kahn D."/>
            <person name="Kahn M.L."/>
            <person name="Kalman S."/>
            <person name="Keating D.H."/>
            <person name="Kiss E."/>
            <person name="Komp C."/>
            <person name="Lelaure V."/>
            <person name="Masuy D."/>
            <person name="Palm C."/>
            <person name="Peck M.C."/>
            <person name="Pohl T.M."/>
            <person name="Portetelle D."/>
            <person name="Purnelle B."/>
            <person name="Ramsperger U."/>
            <person name="Surzycki R."/>
            <person name="Thebault P."/>
            <person name="Vandenbol M."/>
            <person name="Vorhoelter F.J."/>
            <person name="Weidner S."/>
            <person name="Wells D.H."/>
            <person name="Wong K."/>
            <person name="Yeh K.-C."/>
            <person name="Batut J."/>
        </authorList>
    </citation>
    <scope>NUCLEOTIDE SEQUENCE [LARGE SCALE GENOMIC DNA]</scope>
    <source>
        <strain>1021</strain>
    </source>
</reference>
<reference key="4">
    <citation type="journal article" date="1995" name="Mol. Gen. Genet.">
        <title>Extension of the Rhizobium meliloti succinoglycan biosynthesis gene cluster: identification of the exsA gene encoding an ABC transporter protein, and the exsB gene which probably codes for a regulator of succinoglycan biosynthesis.</title>
        <authorList>
            <person name="Becker A."/>
            <person name="Kuester H."/>
            <person name="Niehaus K."/>
            <person name="Puehler A."/>
        </authorList>
    </citation>
    <scope>NUCLEOTIDE SEQUENCE [GENOMIC DNA] OF 1-43</scope>
    <source>
        <strain>RCR2011 / SU47</strain>
    </source>
</reference>
<name>EXOB_RHIME</name>
<feature type="chain" id="PRO_0000183228" description="UDP-glucose 4-epimerase">
    <location>
        <begin position="1"/>
        <end position="328"/>
    </location>
</feature>
<feature type="active site" description="Proton acceptor" evidence="1">
    <location>
        <position position="143"/>
    </location>
</feature>
<feature type="binding site" evidence="1">
    <location>
        <position position="119"/>
    </location>
    <ligand>
        <name>substrate</name>
    </ligand>
</feature>